<gene>
    <name evidence="1" type="primary">speB</name>
    <name type="ordered locus">EC55989_3229</name>
</gene>
<reference key="1">
    <citation type="journal article" date="2009" name="PLoS Genet.">
        <title>Organised genome dynamics in the Escherichia coli species results in highly diverse adaptive paths.</title>
        <authorList>
            <person name="Touchon M."/>
            <person name="Hoede C."/>
            <person name="Tenaillon O."/>
            <person name="Barbe V."/>
            <person name="Baeriswyl S."/>
            <person name="Bidet P."/>
            <person name="Bingen E."/>
            <person name="Bonacorsi S."/>
            <person name="Bouchier C."/>
            <person name="Bouvet O."/>
            <person name="Calteau A."/>
            <person name="Chiapello H."/>
            <person name="Clermont O."/>
            <person name="Cruveiller S."/>
            <person name="Danchin A."/>
            <person name="Diard M."/>
            <person name="Dossat C."/>
            <person name="Karoui M.E."/>
            <person name="Frapy E."/>
            <person name="Garry L."/>
            <person name="Ghigo J.M."/>
            <person name="Gilles A.M."/>
            <person name="Johnson J."/>
            <person name="Le Bouguenec C."/>
            <person name="Lescat M."/>
            <person name="Mangenot S."/>
            <person name="Martinez-Jehanne V."/>
            <person name="Matic I."/>
            <person name="Nassif X."/>
            <person name="Oztas S."/>
            <person name="Petit M.A."/>
            <person name="Pichon C."/>
            <person name="Rouy Z."/>
            <person name="Ruf C.S."/>
            <person name="Schneider D."/>
            <person name="Tourret J."/>
            <person name="Vacherie B."/>
            <person name="Vallenet D."/>
            <person name="Medigue C."/>
            <person name="Rocha E.P.C."/>
            <person name="Denamur E."/>
        </authorList>
    </citation>
    <scope>NUCLEOTIDE SEQUENCE [LARGE SCALE GENOMIC DNA]</scope>
    <source>
        <strain>55989 / EAEC</strain>
    </source>
</reference>
<protein>
    <recommendedName>
        <fullName evidence="1">Agmatinase</fullName>
        <ecNumber evidence="1">3.5.3.11</ecNumber>
    </recommendedName>
    <alternativeName>
        <fullName evidence="1">Agmatine ureohydrolase</fullName>
        <shortName evidence="1">AUH</shortName>
    </alternativeName>
</protein>
<sequence length="306" mass="33542">MSTLGHQYDNSLVSNAFGFLRLPMNFQPYDSDADWVITGVPFDMATSGRAGGRHGPAAIRQVSTNLAWEHNRFPWNFDMRERLNVVDCGDLVYAFGDAREMSEKLQAHAEKLLAAGKRMLSFGGDHFVTLPLLRAHAKHFGKMALVHFDAHTDTYANGCEFDHGTMFYTAPKEGLIDPNHSVQIGIRTEFDIDNGFTVLDACQVNDRSVDDVIAQVKQIVGDMPVYLTFDIDCLDPAFAPGTGTPVIGGLTSDRAIKLVRGLKDLNIVGMDVVEVAPAYDQSEITALAAATLALEMLYIQAAKKGE</sequence>
<name>SPEB_ECO55</name>
<comment type="function">
    <text evidence="1">Catalyzes the formation of putrescine from agmatine.</text>
</comment>
<comment type="catalytic activity">
    <reaction evidence="1">
        <text>agmatine + H2O = urea + putrescine</text>
        <dbReference type="Rhea" id="RHEA:13929"/>
        <dbReference type="ChEBI" id="CHEBI:15377"/>
        <dbReference type="ChEBI" id="CHEBI:16199"/>
        <dbReference type="ChEBI" id="CHEBI:58145"/>
        <dbReference type="ChEBI" id="CHEBI:326268"/>
        <dbReference type="EC" id="3.5.3.11"/>
    </reaction>
</comment>
<comment type="cofactor">
    <cofactor evidence="1">
        <name>Mn(2+)</name>
        <dbReference type="ChEBI" id="CHEBI:29035"/>
    </cofactor>
</comment>
<comment type="pathway">
    <text evidence="1">Amine and polyamine biosynthesis; putrescine biosynthesis via agmatine pathway; putrescine from agmatine: step 1/1.</text>
</comment>
<comment type="similarity">
    <text evidence="1">Belongs to the arginase family. Agmatinase subfamily.</text>
</comment>
<evidence type="ECO:0000255" key="1">
    <source>
        <dbReference type="HAMAP-Rule" id="MF_01418"/>
    </source>
</evidence>
<accession>B7LFJ6</accession>
<feature type="chain" id="PRO_1000184847" description="Agmatinase">
    <location>
        <begin position="1"/>
        <end position="306"/>
    </location>
</feature>
<feature type="binding site" evidence="1">
    <location>
        <position position="126"/>
    </location>
    <ligand>
        <name>Mn(2+)</name>
        <dbReference type="ChEBI" id="CHEBI:29035"/>
    </ligand>
</feature>
<feature type="binding site" evidence="1">
    <location>
        <position position="149"/>
    </location>
    <ligand>
        <name>Mn(2+)</name>
        <dbReference type="ChEBI" id="CHEBI:29035"/>
    </ligand>
</feature>
<feature type="binding site" evidence="1">
    <location>
        <position position="151"/>
    </location>
    <ligand>
        <name>Mn(2+)</name>
        <dbReference type="ChEBI" id="CHEBI:29035"/>
    </ligand>
</feature>
<feature type="binding site" evidence="1">
    <location>
        <position position="153"/>
    </location>
    <ligand>
        <name>Mn(2+)</name>
        <dbReference type="ChEBI" id="CHEBI:29035"/>
    </ligand>
</feature>
<feature type="binding site" evidence="1">
    <location>
        <position position="230"/>
    </location>
    <ligand>
        <name>Mn(2+)</name>
        <dbReference type="ChEBI" id="CHEBI:29035"/>
    </ligand>
</feature>
<feature type="binding site" evidence="1">
    <location>
        <position position="232"/>
    </location>
    <ligand>
        <name>Mn(2+)</name>
        <dbReference type="ChEBI" id="CHEBI:29035"/>
    </ligand>
</feature>
<dbReference type="EC" id="3.5.3.11" evidence="1"/>
<dbReference type="EMBL" id="CU928145">
    <property type="protein sequence ID" value="CAU99217.1"/>
    <property type="molecule type" value="Genomic_DNA"/>
</dbReference>
<dbReference type="RefSeq" id="WP_000105559.1">
    <property type="nucleotide sequence ID" value="NC_011748.1"/>
</dbReference>
<dbReference type="SMR" id="B7LFJ6"/>
<dbReference type="KEGG" id="eck:EC55989_3229"/>
<dbReference type="HOGENOM" id="CLU_039478_0_0_6"/>
<dbReference type="UniPathway" id="UPA00534">
    <property type="reaction ID" value="UER00287"/>
</dbReference>
<dbReference type="Proteomes" id="UP000000746">
    <property type="component" value="Chromosome"/>
</dbReference>
<dbReference type="GO" id="GO:0008783">
    <property type="term" value="F:agmatinase activity"/>
    <property type="evidence" value="ECO:0007669"/>
    <property type="project" value="UniProtKB-UniRule"/>
</dbReference>
<dbReference type="GO" id="GO:0030145">
    <property type="term" value="F:manganese ion binding"/>
    <property type="evidence" value="ECO:0007669"/>
    <property type="project" value="InterPro"/>
</dbReference>
<dbReference type="GO" id="GO:0033389">
    <property type="term" value="P:putrescine biosynthetic process from arginine, via agmatine"/>
    <property type="evidence" value="ECO:0007669"/>
    <property type="project" value="TreeGrafter"/>
</dbReference>
<dbReference type="GO" id="GO:0008295">
    <property type="term" value="P:spermidine biosynthetic process"/>
    <property type="evidence" value="ECO:0007669"/>
    <property type="project" value="UniProtKB-UniRule"/>
</dbReference>
<dbReference type="CDD" id="cd11592">
    <property type="entry name" value="Agmatinase_PAH"/>
    <property type="match status" value="1"/>
</dbReference>
<dbReference type="FunFam" id="3.40.800.10:FF:000001">
    <property type="entry name" value="Agmatinase"/>
    <property type="match status" value="1"/>
</dbReference>
<dbReference type="Gene3D" id="3.40.800.10">
    <property type="entry name" value="Ureohydrolase domain"/>
    <property type="match status" value="1"/>
</dbReference>
<dbReference type="HAMAP" id="MF_01418">
    <property type="entry name" value="SpeB"/>
    <property type="match status" value="1"/>
</dbReference>
<dbReference type="InterPro" id="IPR023694">
    <property type="entry name" value="Agmatinase"/>
</dbReference>
<dbReference type="InterPro" id="IPR005925">
    <property type="entry name" value="Agmatinase-rel"/>
</dbReference>
<dbReference type="InterPro" id="IPR006035">
    <property type="entry name" value="Ureohydrolase"/>
</dbReference>
<dbReference type="InterPro" id="IPR023696">
    <property type="entry name" value="Ureohydrolase_dom_sf"/>
</dbReference>
<dbReference type="InterPro" id="IPR020855">
    <property type="entry name" value="Ureohydrolase_Mn_BS"/>
</dbReference>
<dbReference type="NCBIfam" id="TIGR01230">
    <property type="entry name" value="agmatinase"/>
    <property type="match status" value="1"/>
</dbReference>
<dbReference type="NCBIfam" id="NF002564">
    <property type="entry name" value="PRK02190.1"/>
    <property type="match status" value="1"/>
</dbReference>
<dbReference type="PANTHER" id="PTHR11358">
    <property type="entry name" value="ARGINASE/AGMATINASE"/>
    <property type="match status" value="1"/>
</dbReference>
<dbReference type="PANTHER" id="PTHR11358:SF26">
    <property type="entry name" value="GUANIDINO ACID HYDROLASE, MITOCHONDRIAL"/>
    <property type="match status" value="1"/>
</dbReference>
<dbReference type="Pfam" id="PF00491">
    <property type="entry name" value="Arginase"/>
    <property type="match status" value="1"/>
</dbReference>
<dbReference type="PIRSF" id="PIRSF036979">
    <property type="entry name" value="Arginase"/>
    <property type="match status" value="1"/>
</dbReference>
<dbReference type="SUPFAM" id="SSF52768">
    <property type="entry name" value="Arginase/deacetylase"/>
    <property type="match status" value="1"/>
</dbReference>
<dbReference type="PROSITE" id="PS01053">
    <property type="entry name" value="ARGINASE_1"/>
    <property type="match status" value="1"/>
</dbReference>
<dbReference type="PROSITE" id="PS51409">
    <property type="entry name" value="ARGINASE_2"/>
    <property type="match status" value="1"/>
</dbReference>
<proteinExistence type="inferred from homology"/>
<keyword id="KW-0378">Hydrolase</keyword>
<keyword id="KW-0464">Manganese</keyword>
<keyword id="KW-0479">Metal-binding</keyword>
<keyword id="KW-0620">Polyamine biosynthesis</keyword>
<keyword id="KW-0661">Putrescine biosynthesis</keyword>
<keyword id="KW-1185">Reference proteome</keyword>
<keyword id="KW-0745">Spermidine biosynthesis</keyword>
<organism>
    <name type="scientific">Escherichia coli (strain 55989 / EAEC)</name>
    <dbReference type="NCBI Taxonomy" id="585055"/>
    <lineage>
        <taxon>Bacteria</taxon>
        <taxon>Pseudomonadati</taxon>
        <taxon>Pseudomonadota</taxon>
        <taxon>Gammaproteobacteria</taxon>
        <taxon>Enterobacterales</taxon>
        <taxon>Enterobacteriaceae</taxon>
        <taxon>Escherichia</taxon>
    </lineage>
</organism>